<protein>
    <recommendedName>
        <fullName evidence="1">NH(3)-dependent NAD(+) synthetase</fullName>
        <ecNumber evidence="1">6.3.1.5</ecNumber>
    </recommendedName>
</protein>
<accession>B2U3C0</accession>
<feature type="chain" id="PRO_1000099047" description="NH(3)-dependent NAD(+) synthetase">
    <location>
        <begin position="1"/>
        <end position="275"/>
    </location>
</feature>
<feature type="binding site" evidence="1">
    <location>
        <begin position="46"/>
        <end position="53"/>
    </location>
    <ligand>
        <name>ATP</name>
        <dbReference type="ChEBI" id="CHEBI:30616"/>
    </ligand>
</feature>
<feature type="binding site" evidence="1">
    <location>
        <position position="52"/>
    </location>
    <ligand>
        <name>Mg(2+)</name>
        <dbReference type="ChEBI" id="CHEBI:18420"/>
    </ligand>
</feature>
<feature type="binding site" evidence="1">
    <location>
        <position position="140"/>
    </location>
    <ligand>
        <name>deamido-NAD(+)</name>
        <dbReference type="ChEBI" id="CHEBI:58437"/>
    </ligand>
</feature>
<feature type="binding site" evidence="1">
    <location>
        <position position="160"/>
    </location>
    <ligand>
        <name>ATP</name>
        <dbReference type="ChEBI" id="CHEBI:30616"/>
    </ligand>
</feature>
<feature type="binding site" evidence="1">
    <location>
        <position position="165"/>
    </location>
    <ligand>
        <name>Mg(2+)</name>
        <dbReference type="ChEBI" id="CHEBI:18420"/>
    </ligand>
</feature>
<feature type="binding site" evidence="1">
    <location>
        <position position="173"/>
    </location>
    <ligand>
        <name>deamido-NAD(+)</name>
        <dbReference type="ChEBI" id="CHEBI:58437"/>
    </ligand>
</feature>
<feature type="binding site" evidence="1">
    <location>
        <position position="180"/>
    </location>
    <ligand>
        <name>deamido-NAD(+)</name>
        <dbReference type="ChEBI" id="CHEBI:58437"/>
    </ligand>
</feature>
<feature type="binding site" evidence="1">
    <location>
        <position position="189"/>
    </location>
    <ligand>
        <name>ATP</name>
        <dbReference type="ChEBI" id="CHEBI:30616"/>
    </ligand>
</feature>
<feature type="binding site" evidence="1">
    <location>
        <position position="211"/>
    </location>
    <ligand>
        <name>ATP</name>
        <dbReference type="ChEBI" id="CHEBI:30616"/>
    </ligand>
</feature>
<feature type="binding site" evidence="1">
    <location>
        <begin position="260"/>
        <end position="261"/>
    </location>
    <ligand>
        <name>deamido-NAD(+)</name>
        <dbReference type="ChEBI" id="CHEBI:58437"/>
    </ligand>
</feature>
<organism>
    <name type="scientific">Shigella boydii serotype 18 (strain CDC 3083-94 / BS512)</name>
    <dbReference type="NCBI Taxonomy" id="344609"/>
    <lineage>
        <taxon>Bacteria</taxon>
        <taxon>Pseudomonadati</taxon>
        <taxon>Pseudomonadota</taxon>
        <taxon>Gammaproteobacteria</taxon>
        <taxon>Enterobacterales</taxon>
        <taxon>Enterobacteriaceae</taxon>
        <taxon>Shigella</taxon>
    </lineage>
</organism>
<gene>
    <name evidence="1" type="primary">nadE</name>
    <name type="ordered locus">SbBS512_E1984</name>
</gene>
<name>NADE_SHIB3</name>
<evidence type="ECO:0000255" key="1">
    <source>
        <dbReference type="HAMAP-Rule" id="MF_00193"/>
    </source>
</evidence>
<reference key="1">
    <citation type="submission" date="2008-05" db="EMBL/GenBank/DDBJ databases">
        <title>Complete sequence of Shigella boydii serotype 18 strain BS512.</title>
        <authorList>
            <person name="Rasko D.A."/>
            <person name="Rosovitz M."/>
            <person name="Maurelli A.T."/>
            <person name="Myers G."/>
            <person name="Seshadri R."/>
            <person name="Cer R."/>
            <person name="Jiang L."/>
            <person name="Ravel J."/>
            <person name="Sebastian Y."/>
        </authorList>
    </citation>
    <scope>NUCLEOTIDE SEQUENCE [LARGE SCALE GENOMIC DNA]</scope>
    <source>
        <strain>CDC 3083-94 / BS512</strain>
    </source>
</reference>
<dbReference type="EC" id="6.3.1.5" evidence="1"/>
<dbReference type="EMBL" id="CP001063">
    <property type="protein sequence ID" value="ACD08900.1"/>
    <property type="molecule type" value="Genomic_DNA"/>
</dbReference>
<dbReference type="RefSeq" id="WP_000175055.1">
    <property type="nucleotide sequence ID" value="NC_010658.1"/>
</dbReference>
<dbReference type="SMR" id="B2U3C0"/>
<dbReference type="STRING" id="344609.SbBS512_E1984"/>
<dbReference type="KEGG" id="sbc:SbBS512_E1984"/>
<dbReference type="HOGENOM" id="CLU_059327_3_0_6"/>
<dbReference type="UniPathway" id="UPA00253">
    <property type="reaction ID" value="UER00333"/>
</dbReference>
<dbReference type="Proteomes" id="UP000001030">
    <property type="component" value="Chromosome"/>
</dbReference>
<dbReference type="GO" id="GO:0005737">
    <property type="term" value="C:cytoplasm"/>
    <property type="evidence" value="ECO:0007669"/>
    <property type="project" value="InterPro"/>
</dbReference>
<dbReference type="GO" id="GO:0005524">
    <property type="term" value="F:ATP binding"/>
    <property type="evidence" value="ECO:0007669"/>
    <property type="project" value="UniProtKB-UniRule"/>
</dbReference>
<dbReference type="GO" id="GO:0004359">
    <property type="term" value="F:glutaminase activity"/>
    <property type="evidence" value="ECO:0007669"/>
    <property type="project" value="InterPro"/>
</dbReference>
<dbReference type="GO" id="GO:0046872">
    <property type="term" value="F:metal ion binding"/>
    <property type="evidence" value="ECO:0007669"/>
    <property type="project" value="UniProtKB-KW"/>
</dbReference>
<dbReference type="GO" id="GO:0003952">
    <property type="term" value="F:NAD+ synthase (glutamine-hydrolyzing) activity"/>
    <property type="evidence" value="ECO:0007669"/>
    <property type="project" value="InterPro"/>
</dbReference>
<dbReference type="GO" id="GO:0008795">
    <property type="term" value="F:NAD+ synthase activity"/>
    <property type="evidence" value="ECO:0007669"/>
    <property type="project" value="UniProtKB-UniRule"/>
</dbReference>
<dbReference type="GO" id="GO:0009435">
    <property type="term" value="P:NAD biosynthetic process"/>
    <property type="evidence" value="ECO:0007669"/>
    <property type="project" value="UniProtKB-UniRule"/>
</dbReference>
<dbReference type="CDD" id="cd00553">
    <property type="entry name" value="NAD_synthase"/>
    <property type="match status" value="1"/>
</dbReference>
<dbReference type="FunFam" id="3.40.50.620:FF:000015">
    <property type="entry name" value="NH(3)-dependent NAD(+) synthetase"/>
    <property type="match status" value="1"/>
</dbReference>
<dbReference type="Gene3D" id="3.40.50.620">
    <property type="entry name" value="HUPs"/>
    <property type="match status" value="1"/>
</dbReference>
<dbReference type="HAMAP" id="MF_00193">
    <property type="entry name" value="NadE_ammonia_dep"/>
    <property type="match status" value="1"/>
</dbReference>
<dbReference type="InterPro" id="IPR022310">
    <property type="entry name" value="NAD/GMP_synthase"/>
</dbReference>
<dbReference type="InterPro" id="IPR003694">
    <property type="entry name" value="NAD_synthase"/>
</dbReference>
<dbReference type="InterPro" id="IPR022926">
    <property type="entry name" value="NH(3)-dep_NAD(+)_synth"/>
</dbReference>
<dbReference type="InterPro" id="IPR014729">
    <property type="entry name" value="Rossmann-like_a/b/a_fold"/>
</dbReference>
<dbReference type="NCBIfam" id="TIGR00552">
    <property type="entry name" value="nadE"/>
    <property type="match status" value="1"/>
</dbReference>
<dbReference type="NCBIfam" id="NF001979">
    <property type="entry name" value="PRK00768.1"/>
    <property type="match status" value="1"/>
</dbReference>
<dbReference type="PANTHER" id="PTHR23090">
    <property type="entry name" value="NH 3 /GLUTAMINE-DEPENDENT NAD + SYNTHETASE"/>
    <property type="match status" value="1"/>
</dbReference>
<dbReference type="PANTHER" id="PTHR23090:SF7">
    <property type="entry name" value="NH(3)-DEPENDENT NAD(+) SYNTHETASE"/>
    <property type="match status" value="1"/>
</dbReference>
<dbReference type="Pfam" id="PF02540">
    <property type="entry name" value="NAD_synthase"/>
    <property type="match status" value="1"/>
</dbReference>
<dbReference type="SUPFAM" id="SSF52402">
    <property type="entry name" value="Adenine nucleotide alpha hydrolases-like"/>
    <property type="match status" value="1"/>
</dbReference>
<proteinExistence type="inferred from homology"/>
<sequence>MTLQQQIIKALGSKPQINAEEEIRRSVDFLKSYLQTYPFIKSLVLGISGGQDSTLAGKLCQMAINELRQETGNESLQFIAVRLPYGVQADEQDCQDAIAFIQPDRVLTVNIKGAVLASEQALREADIELSDFVRGNEKARERMKAQYSIAGMTSGVVVGTDHAAEAITGFFTKYGDGGTDINPLYRLNKRQGKQLLAALACPEHLYKKAPTADLEDDRPSLPDEVALGVTYDNIDDYLEGKNVPQQVARTIENWYLKTEHKRRPPITVFDDFWKK</sequence>
<keyword id="KW-0067">ATP-binding</keyword>
<keyword id="KW-0436">Ligase</keyword>
<keyword id="KW-0460">Magnesium</keyword>
<keyword id="KW-0479">Metal-binding</keyword>
<keyword id="KW-0520">NAD</keyword>
<keyword id="KW-0547">Nucleotide-binding</keyword>
<keyword id="KW-1185">Reference proteome</keyword>
<comment type="function">
    <text evidence="1">Catalyzes the ATP-dependent amidation of deamido-NAD to form NAD. Uses ammonia as a nitrogen source.</text>
</comment>
<comment type="catalytic activity">
    <reaction evidence="1">
        <text>deamido-NAD(+) + NH4(+) + ATP = AMP + diphosphate + NAD(+) + H(+)</text>
        <dbReference type="Rhea" id="RHEA:21188"/>
        <dbReference type="ChEBI" id="CHEBI:15378"/>
        <dbReference type="ChEBI" id="CHEBI:28938"/>
        <dbReference type="ChEBI" id="CHEBI:30616"/>
        <dbReference type="ChEBI" id="CHEBI:33019"/>
        <dbReference type="ChEBI" id="CHEBI:57540"/>
        <dbReference type="ChEBI" id="CHEBI:58437"/>
        <dbReference type="ChEBI" id="CHEBI:456215"/>
        <dbReference type="EC" id="6.3.1.5"/>
    </reaction>
</comment>
<comment type="pathway">
    <text evidence="1">Cofactor biosynthesis; NAD(+) biosynthesis; NAD(+) from deamido-NAD(+) (ammonia route): step 1/1.</text>
</comment>
<comment type="subunit">
    <text evidence="1">Homodimer.</text>
</comment>
<comment type="similarity">
    <text evidence="1">Belongs to the NAD synthetase family.</text>
</comment>